<protein>
    <recommendedName>
        <fullName>Purine nucleoside phosphorylase BQ2027_MB2173C</fullName>
        <ecNumber evidence="2">2.4.2.1</ecNumber>
    </recommendedName>
    <alternativeName>
        <fullName>Adenosine deaminase BQ2027_MB2173C</fullName>
        <ecNumber evidence="2">3.5.4.4</ecNumber>
    </alternativeName>
    <alternativeName>
        <fullName>S-methyl-5'-thioadenosine phosphorylase BQ2027_MB2173C</fullName>
        <ecNumber evidence="2">2.4.2.28</ecNumber>
    </alternativeName>
</protein>
<accession>P67257</accession>
<accession>A0A1R3Y0C3</accession>
<accession>O06227</accession>
<accession>X2BJI0</accession>
<reference key="1">
    <citation type="journal article" date="2003" name="Proc. Natl. Acad. Sci. U.S.A.">
        <title>The complete genome sequence of Mycobacterium bovis.</title>
        <authorList>
            <person name="Garnier T."/>
            <person name="Eiglmeier K."/>
            <person name="Camus J.-C."/>
            <person name="Medina N."/>
            <person name="Mansoor H."/>
            <person name="Pryor M."/>
            <person name="Duthoy S."/>
            <person name="Grondin S."/>
            <person name="Lacroix C."/>
            <person name="Monsempe C."/>
            <person name="Simon S."/>
            <person name="Harris B."/>
            <person name="Atkin R."/>
            <person name="Doggett J."/>
            <person name="Mayes R."/>
            <person name="Keating L."/>
            <person name="Wheeler P.R."/>
            <person name="Parkhill J."/>
            <person name="Barrell B.G."/>
            <person name="Cole S.T."/>
            <person name="Gordon S.V."/>
            <person name="Hewinson R.G."/>
        </authorList>
    </citation>
    <scope>NUCLEOTIDE SEQUENCE [LARGE SCALE GENOMIC DNA]</scope>
    <source>
        <strain>ATCC BAA-935 / AF2122/97</strain>
    </source>
</reference>
<reference key="2">
    <citation type="journal article" date="2017" name="Genome Announc.">
        <title>Updated reference genome sequence and annotation of Mycobacterium bovis AF2122/97.</title>
        <authorList>
            <person name="Malone K.M."/>
            <person name="Farrell D."/>
            <person name="Stuber T.P."/>
            <person name="Schubert O.T."/>
            <person name="Aebersold R."/>
            <person name="Robbe-Austerman S."/>
            <person name="Gordon S.V."/>
        </authorList>
    </citation>
    <scope>NUCLEOTIDE SEQUENCE [LARGE SCALE GENOMIC DNA]</scope>
    <scope>GENOME REANNOTATION</scope>
    <source>
        <strain>ATCC BAA-935 / AF2122/97</strain>
    </source>
</reference>
<gene>
    <name type="ordered locus">BQ2027_MB2173C</name>
</gene>
<comment type="function">
    <text evidence="2">Purine nucleoside enzyme that catalyzes the phosphorolysis of adenosine and inosine nucleosides, yielding D-ribose 1-phosphate and the respective free bases, adenine and hypoxanthine. Also catalyzes the phosphorolysis of S-methyl-5'-thioadenosine into adenine and S-methyl-5-thio-alpha-D-ribose 1-phosphate. Also has adenosine deaminase activity.</text>
</comment>
<comment type="catalytic activity">
    <reaction evidence="2">
        <text>adenosine + phosphate = alpha-D-ribose 1-phosphate + adenine</text>
        <dbReference type="Rhea" id="RHEA:27642"/>
        <dbReference type="ChEBI" id="CHEBI:16335"/>
        <dbReference type="ChEBI" id="CHEBI:16708"/>
        <dbReference type="ChEBI" id="CHEBI:43474"/>
        <dbReference type="ChEBI" id="CHEBI:57720"/>
        <dbReference type="EC" id="2.4.2.1"/>
    </reaction>
    <physiologicalReaction direction="left-to-right" evidence="2">
        <dbReference type="Rhea" id="RHEA:27643"/>
    </physiologicalReaction>
</comment>
<comment type="catalytic activity">
    <reaction evidence="2">
        <text>S-methyl-5'-thioadenosine + phosphate = 5-(methylsulfanyl)-alpha-D-ribose 1-phosphate + adenine</text>
        <dbReference type="Rhea" id="RHEA:11852"/>
        <dbReference type="ChEBI" id="CHEBI:16708"/>
        <dbReference type="ChEBI" id="CHEBI:17509"/>
        <dbReference type="ChEBI" id="CHEBI:43474"/>
        <dbReference type="ChEBI" id="CHEBI:58533"/>
        <dbReference type="EC" id="2.4.2.28"/>
    </reaction>
    <physiologicalReaction direction="left-to-right" evidence="2">
        <dbReference type="Rhea" id="RHEA:11853"/>
    </physiologicalReaction>
</comment>
<comment type="catalytic activity">
    <reaction evidence="2">
        <text>inosine + phosphate = alpha-D-ribose 1-phosphate + hypoxanthine</text>
        <dbReference type="Rhea" id="RHEA:27646"/>
        <dbReference type="ChEBI" id="CHEBI:17368"/>
        <dbReference type="ChEBI" id="CHEBI:17596"/>
        <dbReference type="ChEBI" id="CHEBI:43474"/>
        <dbReference type="ChEBI" id="CHEBI:57720"/>
        <dbReference type="EC" id="2.4.2.1"/>
    </reaction>
    <physiologicalReaction direction="left-to-right" evidence="2">
        <dbReference type="Rhea" id="RHEA:27647"/>
    </physiologicalReaction>
</comment>
<comment type="catalytic activity">
    <reaction evidence="2">
        <text>adenosine + H2O + H(+) = inosine + NH4(+)</text>
        <dbReference type="Rhea" id="RHEA:24408"/>
        <dbReference type="ChEBI" id="CHEBI:15377"/>
        <dbReference type="ChEBI" id="CHEBI:15378"/>
        <dbReference type="ChEBI" id="CHEBI:16335"/>
        <dbReference type="ChEBI" id="CHEBI:17596"/>
        <dbReference type="ChEBI" id="CHEBI:28938"/>
        <dbReference type="EC" id="3.5.4.4"/>
    </reaction>
    <physiologicalReaction direction="left-to-right" evidence="2">
        <dbReference type="Rhea" id="RHEA:24409"/>
    </physiologicalReaction>
</comment>
<comment type="cofactor">
    <cofactor evidence="1">
        <name>Cu(2+)</name>
        <dbReference type="ChEBI" id="CHEBI:29036"/>
    </cofactor>
    <cofactor evidence="2">
        <name>Zn(2+)</name>
        <dbReference type="ChEBI" id="CHEBI:29105"/>
    </cofactor>
</comment>
<comment type="subunit">
    <text evidence="3">Homodimer.</text>
</comment>
<comment type="similarity">
    <text evidence="4">Belongs to the purine nucleoside phosphorylase YfiH/LACC1 family.</text>
</comment>
<sequence length="250" mass="25965">MLASTRHIARGDTGNVSVRIRRVTTTRAGGVSAPPFDTFNLGDHVGDDPAAVAANRARLAAAIGLPGNRVVWMNQVHGDRVELVDQPRNTALDDTDGLVTATPRLALAVVTADCVPVLMADARAGIAAAVHAGRAGAQRGVVVRALEVMLSLGAQVRDISALLGPAVSGRNYEVPAAMADEVEAALPGSRTTTAAGTPGVDLRAGIACQLRDLGVESIDVDPRCTVADPTLFSHRRDAPTGRFASLVWME</sequence>
<evidence type="ECO:0000250" key="1">
    <source>
        <dbReference type="UniProtKB" id="P33644"/>
    </source>
</evidence>
<evidence type="ECO:0000250" key="2">
    <source>
        <dbReference type="UniProtKB" id="P84138"/>
    </source>
</evidence>
<evidence type="ECO:0000250" key="3">
    <source>
        <dbReference type="UniProtKB" id="Q1EIR0"/>
    </source>
</evidence>
<evidence type="ECO:0000305" key="4"/>
<keyword id="KW-0186">Copper</keyword>
<keyword id="KW-0378">Hydrolase</keyword>
<keyword id="KW-0479">Metal-binding</keyword>
<keyword id="KW-0560">Oxidoreductase</keyword>
<keyword id="KW-1185">Reference proteome</keyword>
<keyword id="KW-0808">Transferase</keyword>
<keyword id="KW-0862">Zinc</keyword>
<proteinExistence type="inferred from homology"/>
<feature type="chain" id="PRO_0000163167" description="Purine nucleoside phosphorylase BQ2027_MB2173C">
    <location>
        <begin position="1"/>
        <end position="250"/>
    </location>
</feature>
<feature type="binding site" evidence="2">
    <location>
        <position position="77"/>
    </location>
    <ligand>
        <name>Zn(2+)</name>
        <dbReference type="ChEBI" id="CHEBI:29105"/>
        <note>catalytic</note>
    </ligand>
</feature>
<feature type="binding site" evidence="2">
    <location>
        <position position="114"/>
    </location>
    <ligand>
        <name>Zn(2+)</name>
        <dbReference type="ChEBI" id="CHEBI:29105"/>
        <note>catalytic</note>
    </ligand>
</feature>
<feature type="binding site" evidence="2">
    <location>
        <position position="131"/>
    </location>
    <ligand>
        <name>Zn(2+)</name>
        <dbReference type="ChEBI" id="CHEBI:29105"/>
        <note>catalytic</note>
    </ligand>
</feature>
<dbReference type="EC" id="2.4.2.1" evidence="2"/>
<dbReference type="EC" id="3.5.4.4" evidence="2"/>
<dbReference type="EC" id="2.4.2.28" evidence="2"/>
<dbReference type="EMBL" id="LT708304">
    <property type="protein sequence ID" value="SIU00781.1"/>
    <property type="molecule type" value="Genomic_DNA"/>
</dbReference>
<dbReference type="RefSeq" id="NP_855822.1">
    <property type="nucleotide sequence ID" value="NC_002945.3"/>
</dbReference>
<dbReference type="SMR" id="P67257"/>
<dbReference type="KEGG" id="mbo:BQ2027_MB2173C"/>
<dbReference type="PATRIC" id="fig|233413.5.peg.2389"/>
<dbReference type="Proteomes" id="UP000001419">
    <property type="component" value="Chromosome"/>
</dbReference>
<dbReference type="GO" id="GO:0004000">
    <property type="term" value="F:adenosine deaminase activity"/>
    <property type="evidence" value="ECO:0007669"/>
    <property type="project" value="RHEA"/>
</dbReference>
<dbReference type="GO" id="GO:0005507">
    <property type="term" value="F:copper ion binding"/>
    <property type="evidence" value="ECO:0007669"/>
    <property type="project" value="TreeGrafter"/>
</dbReference>
<dbReference type="GO" id="GO:0016491">
    <property type="term" value="F:oxidoreductase activity"/>
    <property type="evidence" value="ECO:0007669"/>
    <property type="project" value="UniProtKB-KW"/>
</dbReference>
<dbReference type="GO" id="GO:0017061">
    <property type="term" value="F:S-methyl-5-thioadenosine phosphorylase activity"/>
    <property type="evidence" value="ECO:0007669"/>
    <property type="project" value="UniProtKB-EC"/>
</dbReference>
<dbReference type="CDD" id="cd16833">
    <property type="entry name" value="YfiH"/>
    <property type="match status" value="1"/>
</dbReference>
<dbReference type="FunFam" id="3.60.140.10:FF:000003">
    <property type="entry name" value="Polyphenol oxidase"/>
    <property type="match status" value="1"/>
</dbReference>
<dbReference type="Gene3D" id="3.60.140.10">
    <property type="entry name" value="CNF1/YfiH-like putative cysteine hydrolases"/>
    <property type="match status" value="1"/>
</dbReference>
<dbReference type="InterPro" id="IPR003730">
    <property type="entry name" value="Cu_polyphenol_OxRdtase"/>
</dbReference>
<dbReference type="InterPro" id="IPR038371">
    <property type="entry name" value="Cu_polyphenol_OxRdtase_sf"/>
</dbReference>
<dbReference type="InterPro" id="IPR011324">
    <property type="entry name" value="Cytotoxic_necrot_fac-like_cat"/>
</dbReference>
<dbReference type="NCBIfam" id="TIGR00726">
    <property type="entry name" value="peptidoglycan editing factor PgeF"/>
    <property type="match status" value="1"/>
</dbReference>
<dbReference type="PANTHER" id="PTHR30616:SF2">
    <property type="entry name" value="PURINE NUCLEOSIDE PHOSPHORYLASE LACC1"/>
    <property type="match status" value="1"/>
</dbReference>
<dbReference type="PANTHER" id="PTHR30616">
    <property type="entry name" value="UNCHARACTERIZED PROTEIN YFIH"/>
    <property type="match status" value="1"/>
</dbReference>
<dbReference type="Pfam" id="PF02578">
    <property type="entry name" value="Cu-oxidase_4"/>
    <property type="match status" value="1"/>
</dbReference>
<dbReference type="SUPFAM" id="SSF64438">
    <property type="entry name" value="CNF1/YfiH-like putative cysteine hydrolases"/>
    <property type="match status" value="1"/>
</dbReference>
<organism>
    <name type="scientific">Mycobacterium bovis (strain ATCC BAA-935 / AF2122/97)</name>
    <dbReference type="NCBI Taxonomy" id="233413"/>
    <lineage>
        <taxon>Bacteria</taxon>
        <taxon>Bacillati</taxon>
        <taxon>Actinomycetota</taxon>
        <taxon>Actinomycetes</taxon>
        <taxon>Mycobacteriales</taxon>
        <taxon>Mycobacteriaceae</taxon>
        <taxon>Mycobacterium</taxon>
        <taxon>Mycobacterium tuberculosis complex</taxon>
    </lineage>
</organism>
<name>PURNU_MYCBO</name>